<protein>
    <recommendedName>
        <fullName evidence="1">Bifunctional protein GlmU</fullName>
    </recommendedName>
    <domain>
        <recommendedName>
            <fullName evidence="1">UDP-N-acetylglucosamine pyrophosphorylase</fullName>
            <ecNumber evidence="1">2.7.7.23</ecNumber>
        </recommendedName>
        <alternativeName>
            <fullName evidence="1">N-acetylglucosamine-1-phosphate uridyltransferase</fullName>
        </alternativeName>
    </domain>
    <domain>
        <recommendedName>
            <fullName evidence="1">Glucosamine-1-phosphate N-acetyltransferase</fullName>
            <ecNumber evidence="1">2.3.1.157</ecNumber>
        </recommendedName>
    </domain>
</protein>
<evidence type="ECO:0000255" key="1">
    <source>
        <dbReference type="HAMAP-Rule" id="MF_01631"/>
    </source>
</evidence>
<keyword id="KW-0012">Acyltransferase</keyword>
<keyword id="KW-0133">Cell shape</keyword>
<keyword id="KW-0961">Cell wall biogenesis/degradation</keyword>
<keyword id="KW-0963">Cytoplasm</keyword>
<keyword id="KW-0460">Magnesium</keyword>
<keyword id="KW-0479">Metal-binding</keyword>
<keyword id="KW-0511">Multifunctional enzyme</keyword>
<keyword id="KW-0548">Nucleotidyltransferase</keyword>
<keyword id="KW-0573">Peptidoglycan synthesis</keyword>
<keyword id="KW-1185">Reference proteome</keyword>
<keyword id="KW-0677">Repeat</keyword>
<keyword id="KW-0808">Transferase</keyword>
<dbReference type="EC" id="2.7.7.23" evidence="1"/>
<dbReference type="EC" id="2.3.1.157" evidence="1"/>
<dbReference type="EMBL" id="CP000143">
    <property type="protein sequence ID" value="ABA78664.1"/>
    <property type="molecule type" value="Genomic_DNA"/>
</dbReference>
<dbReference type="RefSeq" id="WP_011337537.1">
    <property type="nucleotide sequence ID" value="NC_007493.2"/>
</dbReference>
<dbReference type="RefSeq" id="YP_352565.1">
    <property type="nucleotide sequence ID" value="NC_007493.2"/>
</dbReference>
<dbReference type="SMR" id="Q3J3H0"/>
<dbReference type="STRING" id="272943.RSP_2503"/>
<dbReference type="EnsemblBacteria" id="ABA78664">
    <property type="protein sequence ID" value="ABA78664"/>
    <property type="gene ID" value="RSP_2503"/>
</dbReference>
<dbReference type="GeneID" id="3720062"/>
<dbReference type="KEGG" id="rsp:RSP_2503"/>
<dbReference type="PATRIC" id="fig|272943.9.peg.1424"/>
<dbReference type="eggNOG" id="COG1207">
    <property type="taxonomic scope" value="Bacteria"/>
</dbReference>
<dbReference type="OrthoDB" id="9775031at2"/>
<dbReference type="PhylomeDB" id="Q3J3H0"/>
<dbReference type="UniPathway" id="UPA00113">
    <property type="reaction ID" value="UER00532"/>
</dbReference>
<dbReference type="UniPathway" id="UPA00113">
    <property type="reaction ID" value="UER00533"/>
</dbReference>
<dbReference type="UniPathway" id="UPA00973"/>
<dbReference type="Proteomes" id="UP000002703">
    <property type="component" value="Chromosome 1"/>
</dbReference>
<dbReference type="GO" id="GO:0005737">
    <property type="term" value="C:cytoplasm"/>
    <property type="evidence" value="ECO:0007669"/>
    <property type="project" value="UniProtKB-SubCell"/>
</dbReference>
<dbReference type="GO" id="GO:0016020">
    <property type="term" value="C:membrane"/>
    <property type="evidence" value="ECO:0007669"/>
    <property type="project" value="GOC"/>
</dbReference>
<dbReference type="GO" id="GO:0019134">
    <property type="term" value="F:glucosamine-1-phosphate N-acetyltransferase activity"/>
    <property type="evidence" value="ECO:0007669"/>
    <property type="project" value="UniProtKB-UniRule"/>
</dbReference>
<dbReference type="GO" id="GO:0000287">
    <property type="term" value="F:magnesium ion binding"/>
    <property type="evidence" value="ECO:0007669"/>
    <property type="project" value="UniProtKB-UniRule"/>
</dbReference>
<dbReference type="GO" id="GO:0003977">
    <property type="term" value="F:UDP-N-acetylglucosamine diphosphorylase activity"/>
    <property type="evidence" value="ECO:0007669"/>
    <property type="project" value="UniProtKB-UniRule"/>
</dbReference>
<dbReference type="GO" id="GO:0000902">
    <property type="term" value="P:cell morphogenesis"/>
    <property type="evidence" value="ECO:0007669"/>
    <property type="project" value="UniProtKB-UniRule"/>
</dbReference>
<dbReference type="GO" id="GO:0071555">
    <property type="term" value="P:cell wall organization"/>
    <property type="evidence" value="ECO:0007669"/>
    <property type="project" value="UniProtKB-KW"/>
</dbReference>
<dbReference type="GO" id="GO:0009245">
    <property type="term" value="P:lipid A biosynthetic process"/>
    <property type="evidence" value="ECO:0007669"/>
    <property type="project" value="UniProtKB-UniRule"/>
</dbReference>
<dbReference type="GO" id="GO:0009252">
    <property type="term" value="P:peptidoglycan biosynthetic process"/>
    <property type="evidence" value="ECO:0007669"/>
    <property type="project" value="UniProtKB-UniRule"/>
</dbReference>
<dbReference type="GO" id="GO:0008360">
    <property type="term" value="P:regulation of cell shape"/>
    <property type="evidence" value="ECO:0007669"/>
    <property type="project" value="UniProtKB-KW"/>
</dbReference>
<dbReference type="GO" id="GO:0006048">
    <property type="term" value="P:UDP-N-acetylglucosamine biosynthetic process"/>
    <property type="evidence" value="ECO:0007669"/>
    <property type="project" value="UniProtKB-UniPathway"/>
</dbReference>
<dbReference type="CDD" id="cd02540">
    <property type="entry name" value="GT2_GlmU_N_bac"/>
    <property type="match status" value="1"/>
</dbReference>
<dbReference type="CDD" id="cd03353">
    <property type="entry name" value="LbH_GlmU_C"/>
    <property type="match status" value="1"/>
</dbReference>
<dbReference type="Gene3D" id="2.160.10.10">
    <property type="entry name" value="Hexapeptide repeat proteins"/>
    <property type="match status" value="1"/>
</dbReference>
<dbReference type="Gene3D" id="3.90.550.10">
    <property type="entry name" value="Spore Coat Polysaccharide Biosynthesis Protein SpsA, Chain A"/>
    <property type="match status" value="1"/>
</dbReference>
<dbReference type="HAMAP" id="MF_01631">
    <property type="entry name" value="GlmU"/>
    <property type="match status" value="1"/>
</dbReference>
<dbReference type="InterPro" id="IPR005882">
    <property type="entry name" value="Bifunctional_GlmU"/>
</dbReference>
<dbReference type="InterPro" id="IPR050065">
    <property type="entry name" value="GlmU-like"/>
</dbReference>
<dbReference type="InterPro" id="IPR038009">
    <property type="entry name" value="GlmU_C_LbH"/>
</dbReference>
<dbReference type="InterPro" id="IPR018357">
    <property type="entry name" value="Hexapep_transf_CS"/>
</dbReference>
<dbReference type="InterPro" id="IPR025877">
    <property type="entry name" value="MobA-like_NTP_Trfase"/>
</dbReference>
<dbReference type="InterPro" id="IPR029044">
    <property type="entry name" value="Nucleotide-diphossugar_trans"/>
</dbReference>
<dbReference type="InterPro" id="IPR011004">
    <property type="entry name" value="Trimer_LpxA-like_sf"/>
</dbReference>
<dbReference type="NCBIfam" id="TIGR01173">
    <property type="entry name" value="glmU"/>
    <property type="match status" value="1"/>
</dbReference>
<dbReference type="NCBIfam" id="NF010933">
    <property type="entry name" value="PRK14353.1"/>
    <property type="match status" value="1"/>
</dbReference>
<dbReference type="PANTHER" id="PTHR43584:SF3">
    <property type="entry name" value="BIFUNCTIONAL PROTEIN GLMU"/>
    <property type="match status" value="1"/>
</dbReference>
<dbReference type="PANTHER" id="PTHR43584">
    <property type="entry name" value="NUCLEOTIDYL TRANSFERASE"/>
    <property type="match status" value="1"/>
</dbReference>
<dbReference type="Pfam" id="PF12804">
    <property type="entry name" value="NTP_transf_3"/>
    <property type="match status" value="1"/>
</dbReference>
<dbReference type="SUPFAM" id="SSF53448">
    <property type="entry name" value="Nucleotide-diphospho-sugar transferases"/>
    <property type="match status" value="1"/>
</dbReference>
<dbReference type="SUPFAM" id="SSF51161">
    <property type="entry name" value="Trimeric LpxA-like enzymes"/>
    <property type="match status" value="1"/>
</dbReference>
<dbReference type="PROSITE" id="PS00101">
    <property type="entry name" value="HEXAPEP_TRANSFERASES"/>
    <property type="match status" value="1"/>
</dbReference>
<proteinExistence type="inferred from homology"/>
<organism>
    <name type="scientific">Cereibacter sphaeroides (strain ATCC 17023 / DSM 158 / JCM 6121 / CCUG 31486 / LMG 2827 / NBRC 12203 / NCIMB 8253 / ATH 2.4.1.)</name>
    <name type="common">Rhodobacter sphaeroides</name>
    <dbReference type="NCBI Taxonomy" id="272943"/>
    <lineage>
        <taxon>Bacteria</taxon>
        <taxon>Pseudomonadati</taxon>
        <taxon>Pseudomonadota</taxon>
        <taxon>Alphaproteobacteria</taxon>
        <taxon>Rhodobacterales</taxon>
        <taxon>Paracoccaceae</taxon>
        <taxon>Cereibacter</taxon>
    </lineage>
</organism>
<reference key="1">
    <citation type="submission" date="2005-09" db="EMBL/GenBank/DDBJ databases">
        <title>Complete sequence of chromosome 1 of Rhodobacter sphaeroides 2.4.1.</title>
        <authorList>
            <person name="Copeland A."/>
            <person name="Lucas S."/>
            <person name="Lapidus A."/>
            <person name="Barry K."/>
            <person name="Detter J.C."/>
            <person name="Glavina T."/>
            <person name="Hammon N."/>
            <person name="Israni S."/>
            <person name="Pitluck S."/>
            <person name="Richardson P."/>
            <person name="Mackenzie C."/>
            <person name="Choudhary M."/>
            <person name="Larimer F."/>
            <person name="Hauser L.J."/>
            <person name="Land M."/>
            <person name="Donohue T.J."/>
            <person name="Kaplan S."/>
        </authorList>
    </citation>
    <scope>NUCLEOTIDE SEQUENCE [LARGE SCALE GENOMIC DNA]</scope>
    <source>
        <strain>ATCC 17023 / DSM 158 / JCM 6121 / CCUG 31486 / LMG 2827 / NBRC 12203 / NCIMB 8253 / ATH 2.4.1.</strain>
    </source>
</reference>
<accession>Q3J3H0</accession>
<feature type="chain" id="PRO_0000233833" description="Bifunctional protein GlmU">
    <location>
        <begin position="1"/>
        <end position="454"/>
    </location>
</feature>
<feature type="region of interest" description="Pyrophosphorylase" evidence="1">
    <location>
        <begin position="1"/>
        <end position="231"/>
    </location>
</feature>
<feature type="region of interest" description="Linker" evidence="1">
    <location>
        <begin position="232"/>
        <end position="252"/>
    </location>
</feature>
<feature type="region of interest" description="N-acetyltransferase" evidence="1">
    <location>
        <begin position="253"/>
        <end position="454"/>
    </location>
</feature>
<feature type="active site" description="Proton acceptor" evidence="1">
    <location>
        <position position="348"/>
    </location>
</feature>
<feature type="binding site" evidence="1">
    <location>
        <begin position="11"/>
        <end position="14"/>
    </location>
    <ligand>
        <name>UDP-N-acetyl-alpha-D-glucosamine</name>
        <dbReference type="ChEBI" id="CHEBI:57705"/>
    </ligand>
</feature>
<feature type="binding site" evidence="1">
    <location>
        <position position="25"/>
    </location>
    <ligand>
        <name>UDP-N-acetyl-alpha-D-glucosamine</name>
        <dbReference type="ChEBI" id="CHEBI:57705"/>
    </ligand>
</feature>
<feature type="binding site" evidence="1">
    <location>
        <position position="78"/>
    </location>
    <ligand>
        <name>UDP-N-acetyl-alpha-D-glucosamine</name>
        <dbReference type="ChEBI" id="CHEBI:57705"/>
    </ligand>
</feature>
<feature type="binding site" evidence="1">
    <location>
        <begin position="83"/>
        <end position="84"/>
    </location>
    <ligand>
        <name>UDP-N-acetyl-alpha-D-glucosamine</name>
        <dbReference type="ChEBI" id="CHEBI:57705"/>
    </ligand>
</feature>
<feature type="binding site" evidence="1">
    <location>
        <begin position="106"/>
        <end position="108"/>
    </location>
    <ligand>
        <name>UDP-N-acetyl-alpha-D-glucosamine</name>
        <dbReference type="ChEBI" id="CHEBI:57705"/>
    </ligand>
</feature>
<feature type="binding site" evidence="1">
    <location>
        <position position="108"/>
    </location>
    <ligand>
        <name>Mg(2+)</name>
        <dbReference type="ChEBI" id="CHEBI:18420"/>
    </ligand>
</feature>
<feature type="binding site" evidence="1">
    <location>
        <position position="143"/>
    </location>
    <ligand>
        <name>UDP-N-acetyl-alpha-D-glucosamine</name>
        <dbReference type="ChEBI" id="CHEBI:57705"/>
    </ligand>
</feature>
<feature type="binding site" evidence="1">
    <location>
        <position position="157"/>
    </location>
    <ligand>
        <name>UDP-N-acetyl-alpha-D-glucosamine</name>
        <dbReference type="ChEBI" id="CHEBI:57705"/>
    </ligand>
</feature>
<feature type="binding site" evidence="1">
    <location>
        <position position="172"/>
    </location>
    <ligand>
        <name>UDP-N-acetyl-alpha-D-glucosamine</name>
        <dbReference type="ChEBI" id="CHEBI:57705"/>
    </ligand>
</feature>
<feature type="binding site" evidence="1">
    <location>
        <position position="229"/>
    </location>
    <ligand>
        <name>Mg(2+)</name>
        <dbReference type="ChEBI" id="CHEBI:18420"/>
    </ligand>
</feature>
<feature type="binding site" evidence="1">
    <location>
        <position position="229"/>
    </location>
    <ligand>
        <name>UDP-N-acetyl-alpha-D-glucosamine</name>
        <dbReference type="ChEBI" id="CHEBI:57705"/>
    </ligand>
</feature>
<feature type="binding site" evidence="1">
    <location>
        <position position="318"/>
    </location>
    <ligand>
        <name>UDP-N-acetyl-alpha-D-glucosamine</name>
        <dbReference type="ChEBI" id="CHEBI:57705"/>
    </ligand>
</feature>
<feature type="binding site" evidence="1">
    <location>
        <position position="336"/>
    </location>
    <ligand>
        <name>UDP-N-acetyl-alpha-D-glucosamine</name>
        <dbReference type="ChEBI" id="CHEBI:57705"/>
    </ligand>
</feature>
<feature type="binding site" evidence="1">
    <location>
        <position position="351"/>
    </location>
    <ligand>
        <name>UDP-N-acetyl-alpha-D-glucosamine</name>
        <dbReference type="ChEBI" id="CHEBI:57705"/>
    </ligand>
</feature>
<feature type="binding site" evidence="1">
    <location>
        <position position="362"/>
    </location>
    <ligand>
        <name>UDP-N-acetyl-alpha-D-glucosamine</name>
        <dbReference type="ChEBI" id="CHEBI:57705"/>
    </ligand>
</feature>
<feature type="binding site" evidence="1">
    <location>
        <position position="365"/>
    </location>
    <ligand>
        <name>acetyl-CoA</name>
        <dbReference type="ChEBI" id="CHEBI:57288"/>
    </ligand>
</feature>
<feature type="binding site" evidence="1">
    <location>
        <begin position="371"/>
        <end position="372"/>
    </location>
    <ligand>
        <name>acetyl-CoA</name>
        <dbReference type="ChEBI" id="CHEBI:57288"/>
    </ligand>
</feature>
<feature type="binding site" evidence="1">
    <location>
        <position position="390"/>
    </location>
    <ligand>
        <name>acetyl-CoA</name>
        <dbReference type="ChEBI" id="CHEBI:57288"/>
    </ligand>
</feature>
<feature type="binding site" evidence="1">
    <location>
        <position position="408"/>
    </location>
    <ligand>
        <name>acetyl-CoA</name>
        <dbReference type="ChEBI" id="CHEBI:57288"/>
    </ligand>
</feature>
<feature type="binding site" evidence="1">
    <location>
        <position position="425"/>
    </location>
    <ligand>
        <name>acetyl-CoA</name>
        <dbReference type="ChEBI" id="CHEBI:57288"/>
    </ligand>
</feature>
<sequence length="454" mass="47650">MDRATVSLIVLAAGQGTRMNSDLPKVLHPLGAAPMLHHALRAGQSLEPERVVVVAGHGAEAVAKAARAFDESIEVVVQAEQLGTAHAVAQAAPLLADAPGEAVVLYGDTPFIRPETLERMLDLRSRHAVVVLGFEATDPGRYGRLVTRGEELDRIVEWKDATDEERTISLCNSGVICAEAGLLLALVSEVGNANAAGEYYLTDVVALARVRGLSAGVAICDEAETLGVNTRAQLAEAEAEFQKRARAAALEDGVTLTAPDTVFFALDTFLGRDAIVGPNVVFGPGVTVESGAEIRAFCHLEGCHISRGATVGPFARLRPGAELAEDVHVGNFVEIKNAVLDEGVKVGHLTYLGDAHVGEHTNIGAGTVTCNYDGVMKHRTEIGAHAFIGSDTMLVAPVTVGARAMTASGSVITENVPAEALALGRARQVTKPGMATRLMEMFRAAKAAKKKEAP</sequence>
<gene>
    <name evidence="1" type="primary">glmU</name>
    <name type="ordered locus">RHOS4_10960</name>
    <name type="ordered locus">RSP_2503</name>
</gene>
<comment type="function">
    <text evidence="1">Catalyzes the last two sequential reactions in the de novo biosynthetic pathway for UDP-N-acetylglucosamine (UDP-GlcNAc). The C-terminal domain catalyzes the transfer of acetyl group from acetyl coenzyme A to glucosamine-1-phosphate (GlcN-1-P) to produce N-acetylglucosamine-1-phosphate (GlcNAc-1-P), which is converted into UDP-GlcNAc by the transfer of uridine 5-monophosphate (from uridine 5-triphosphate), a reaction catalyzed by the N-terminal domain.</text>
</comment>
<comment type="catalytic activity">
    <reaction evidence="1">
        <text>alpha-D-glucosamine 1-phosphate + acetyl-CoA = N-acetyl-alpha-D-glucosamine 1-phosphate + CoA + H(+)</text>
        <dbReference type="Rhea" id="RHEA:13725"/>
        <dbReference type="ChEBI" id="CHEBI:15378"/>
        <dbReference type="ChEBI" id="CHEBI:57287"/>
        <dbReference type="ChEBI" id="CHEBI:57288"/>
        <dbReference type="ChEBI" id="CHEBI:57776"/>
        <dbReference type="ChEBI" id="CHEBI:58516"/>
        <dbReference type="EC" id="2.3.1.157"/>
    </reaction>
</comment>
<comment type="catalytic activity">
    <reaction evidence="1">
        <text>N-acetyl-alpha-D-glucosamine 1-phosphate + UTP + H(+) = UDP-N-acetyl-alpha-D-glucosamine + diphosphate</text>
        <dbReference type="Rhea" id="RHEA:13509"/>
        <dbReference type="ChEBI" id="CHEBI:15378"/>
        <dbReference type="ChEBI" id="CHEBI:33019"/>
        <dbReference type="ChEBI" id="CHEBI:46398"/>
        <dbReference type="ChEBI" id="CHEBI:57705"/>
        <dbReference type="ChEBI" id="CHEBI:57776"/>
        <dbReference type="EC" id="2.7.7.23"/>
    </reaction>
</comment>
<comment type="cofactor">
    <cofactor evidence="1">
        <name>Mg(2+)</name>
        <dbReference type="ChEBI" id="CHEBI:18420"/>
    </cofactor>
    <text evidence="1">Binds 1 Mg(2+) ion per subunit.</text>
</comment>
<comment type="pathway">
    <text evidence="1">Nucleotide-sugar biosynthesis; UDP-N-acetyl-alpha-D-glucosamine biosynthesis; N-acetyl-alpha-D-glucosamine 1-phosphate from alpha-D-glucosamine 6-phosphate (route II): step 2/2.</text>
</comment>
<comment type="pathway">
    <text evidence="1">Nucleotide-sugar biosynthesis; UDP-N-acetyl-alpha-D-glucosamine biosynthesis; UDP-N-acetyl-alpha-D-glucosamine from N-acetyl-alpha-D-glucosamine 1-phosphate: step 1/1.</text>
</comment>
<comment type="pathway">
    <text evidence="1">Bacterial outer membrane biogenesis; LPS lipid A biosynthesis.</text>
</comment>
<comment type="subunit">
    <text evidence="1">Homotrimer.</text>
</comment>
<comment type="subcellular location">
    <subcellularLocation>
        <location evidence="1">Cytoplasm</location>
    </subcellularLocation>
</comment>
<comment type="similarity">
    <text evidence="1">In the N-terminal section; belongs to the N-acetylglucosamine-1-phosphate uridyltransferase family.</text>
</comment>
<comment type="similarity">
    <text evidence="1">In the C-terminal section; belongs to the transferase hexapeptide repeat family.</text>
</comment>
<name>GLMU_CERS4</name>